<name>TCPG_DICDI</name>
<comment type="function">
    <text evidence="1">Molecular chaperone; assists the folding of proteins upon ATP hydrolysis. Known to play a role, in vitro, in the folding of actin and tubulin (By similarity).</text>
</comment>
<comment type="subunit">
    <text evidence="1">Heterooligomeric complex of about 850 to 900 kDa that forms two stacked rings, 12 to 16 nm in diameter.</text>
</comment>
<comment type="subcellular location">
    <subcellularLocation>
        <location evidence="1">Cytoplasm</location>
    </subcellularLocation>
</comment>
<comment type="similarity">
    <text evidence="2">Belongs to the TCP-1 chaperonin family.</text>
</comment>
<protein>
    <recommendedName>
        <fullName>T-complex protein 1 subunit gamma</fullName>
        <shortName>TCP-1-gamma</shortName>
    </recommendedName>
    <alternativeName>
        <fullName>CCT-gamma</fullName>
    </alternativeName>
</protein>
<gene>
    <name type="primary">cct3</name>
    <name type="ORF">DDB_G0281741</name>
</gene>
<dbReference type="EMBL" id="AAFI02000042">
    <property type="protein sequence ID" value="EAL66632.1"/>
    <property type="molecule type" value="Genomic_DNA"/>
</dbReference>
<dbReference type="RefSeq" id="XP_640613.1">
    <property type="nucleotide sequence ID" value="XM_635521.1"/>
</dbReference>
<dbReference type="SMR" id="Q54TH8"/>
<dbReference type="FunCoup" id="Q54TH8">
    <property type="interactions" value="1265"/>
</dbReference>
<dbReference type="IntAct" id="Q54TH8">
    <property type="interactions" value="1"/>
</dbReference>
<dbReference type="STRING" id="44689.Q54TH8"/>
<dbReference type="PaxDb" id="44689-DDB0233990"/>
<dbReference type="EnsemblProtists" id="EAL66632">
    <property type="protein sequence ID" value="EAL66632"/>
    <property type="gene ID" value="DDB_G0281741"/>
</dbReference>
<dbReference type="GeneID" id="8623223"/>
<dbReference type="KEGG" id="ddi:DDB_G0281741"/>
<dbReference type="dictyBase" id="DDB_G0281741">
    <property type="gene designation" value="cct3"/>
</dbReference>
<dbReference type="VEuPathDB" id="AmoebaDB:DDB_G0281741"/>
<dbReference type="eggNOG" id="KOG0364">
    <property type="taxonomic scope" value="Eukaryota"/>
</dbReference>
<dbReference type="HOGENOM" id="CLU_008891_7_3_1"/>
<dbReference type="InParanoid" id="Q54TH8"/>
<dbReference type="OMA" id="CGGSTIR"/>
<dbReference type="PhylomeDB" id="Q54TH8"/>
<dbReference type="BRENDA" id="3.6.4.B10">
    <property type="organism ID" value="1939"/>
</dbReference>
<dbReference type="Reactome" id="R-DDI-390471">
    <property type="pathway name" value="Association of TriC/CCT with target proteins during biosynthesis"/>
</dbReference>
<dbReference type="Reactome" id="R-DDI-6814122">
    <property type="pathway name" value="Cooperation of PDCL (PhLP1) and TRiC/CCT in G-protein beta folding"/>
</dbReference>
<dbReference type="PRO" id="PR:Q54TH8"/>
<dbReference type="Proteomes" id="UP000002195">
    <property type="component" value="Chromosome 3"/>
</dbReference>
<dbReference type="GO" id="GO:0005832">
    <property type="term" value="C:chaperonin-containing T-complex"/>
    <property type="evidence" value="ECO:0000250"/>
    <property type="project" value="dictyBase"/>
</dbReference>
<dbReference type="GO" id="GO:0005856">
    <property type="term" value="C:cytoskeleton"/>
    <property type="evidence" value="ECO:0000250"/>
    <property type="project" value="dictyBase"/>
</dbReference>
<dbReference type="GO" id="GO:0045335">
    <property type="term" value="C:phagocytic vesicle"/>
    <property type="evidence" value="ECO:0007005"/>
    <property type="project" value="dictyBase"/>
</dbReference>
<dbReference type="GO" id="GO:0005524">
    <property type="term" value="F:ATP binding"/>
    <property type="evidence" value="ECO:0007669"/>
    <property type="project" value="UniProtKB-KW"/>
</dbReference>
<dbReference type="GO" id="GO:0016887">
    <property type="term" value="F:ATP hydrolysis activity"/>
    <property type="evidence" value="ECO:0007669"/>
    <property type="project" value="InterPro"/>
</dbReference>
<dbReference type="GO" id="GO:0140662">
    <property type="term" value="F:ATP-dependent protein folding chaperone"/>
    <property type="evidence" value="ECO:0007669"/>
    <property type="project" value="InterPro"/>
</dbReference>
<dbReference type="GO" id="GO:0051082">
    <property type="term" value="F:unfolded protein binding"/>
    <property type="evidence" value="ECO:0000250"/>
    <property type="project" value="dictyBase"/>
</dbReference>
<dbReference type="GO" id="GO:0006457">
    <property type="term" value="P:protein folding"/>
    <property type="evidence" value="ECO:0000318"/>
    <property type="project" value="GO_Central"/>
</dbReference>
<dbReference type="CDD" id="cd03337">
    <property type="entry name" value="TCP1_gamma"/>
    <property type="match status" value="1"/>
</dbReference>
<dbReference type="FunFam" id="1.10.560.10:FF:000073">
    <property type="entry name" value="T-complex protein 1 subunit gamma"/>
    <property type="match status" value="1"/>
</dbReference>
<dbReference type="FunFam" id="1.10.560.10:FF:000085">
    <property type="entry name" value="T-complex protein 1 subunit gamma"/>
    <property type="match status" value="1"/>
</dbReference>
<dbReference type="FunFam" id="3.50.7.10:FF:000005">
    <property type="entry name" value="T-complex protein 1 subunit gamma"/>
    <property type="match status" value="1"/>
</dbReference>
<dbReference type="Gene3D" id="3.50.7.10">
    <property type="entry name" value="GroEL"/>
    <property type="match status" value="1"/>
</dbReference>
<dbReference type="Gene3D" id="1.10.560.10">
    <property type="entry name" value="GroEL-like equatorial domain"/>
    <property type="match status" value="1"/>
</dbReference>
<dbReference type="Gene3D" id="3.30.260.10">
    <property type="entry name" value="TCP-1-like chaperonin intermediate domain"/>
    <property type="match status" value="1"/>
</dbReference>
<dbReference type="InterPro" id="IPR012719">
    <property type="entry name" value="Chap_CCT_gamma"/>
</dbReference>
<dbReference type="InterPro" id="IPR017998">
    <property type="entry name" value="Chaperone_TCP-1"/>
</dbReference>
<dbReference type="InterPro" id="IPR002194">
    <property type="entry name" value="Chaperonin_TCP-1_CS"/>
</dbReference>
<dbReference type="InterPro" id="IPR002423">
    <property type="entry name" value="Cpn60/GroEL/TCP-1"/>
</dbReference>
<dbReference type="InterPro" id="IPR027409">
    <property type="entry name" value="GroEL-like_apical_dom_sf"/>
</dbReference>
<dbReference type="InterPro" id="IPR027413">
    <property type="entry name" value="GROEL-like_equatorial_sf"/>
</dbReference>
<dbReference type="InterPro" id="IPR027410">
    <property type="entry name" value="TCP-1-like_intermed_sf"/>
</dbReference>
<dbReference type="InterPro" id="IPR053374">
    <property type="entry name" value="TCP-1_chaperonin"/>
</dbReference>
<dbReference type="InterPro" id="IPR054827">
    <property type="entry name" value="thermosome_alpha"/>
</dbReference>
<dbReference type="NCBIfam" id="TIGR02344">
    <property type="entry name" value="chap_CCT_gamma"/>
    <property type="match status" value="1"/>
</dbReference>
<dbReference type="NCBIfam" id="NF041082">
    <property type="entry name" value="thermosome_alpha"/>
    <property type="match status" value="1"/>
</dbReference>
<dbReference type="NCBIfam" id="NF041083">
    <property type="entry name" value="thermosome_beta"/>
    <property type="match status" value="1"/>
</dbReference>
<dbReference type="PANTHER" id="PTHR11353">
    <property type="entry name" value="CHAPERONIN"/>
    <property type="match status" value="1"/>
</dbReference>
<dbReference type="Pfam" id="PF00118">
    <property type="entry name" value="Cpn60_TCP1"/>
    <property type="match status" value="1"/>
</dbReference>
<dbReference type="PRINTS" id="PR00304">
    <property type="entry name" value="TCOMPLEXTCP1"/>
</dbReference>
<dbReference type="SUPFAM" id="SSF52029">
    <property type="entry name" value="GroEL apical domain-like"/>
    <property type="match status" value="1"/>
</dbReference>
<dbReference type="SUPFAM" id="SSF48592">
    <property type="entry name" value="GroEL equatorial domain-like"/>
    <property type="match status" value="1"/>
</dbReference>
<dbReference type="SUPFAM" id="SSF54849">
    <property type="entry name" value="GroEL-intermediate domain like"/>
    <property type="match status" value="1"/>
</dbReference>
<dbReference type="PROSITE" id="PS00750">
    <property type="entry name" value="TCP1_1"/>
    <property type="match status" value="1"/>
</dbReference>
<dbReference type="PROSITE" id="PS00751">
    <property type="entry name" value="TCP1_2"/>
    <property type="match status" value="1"/>
</dbReference>
<dbReference type="PROSITE" id="PS00995">
    <property type="entry name" value="TCP1_3"/>
    <property type="match status" value="1"/>
</dbReference>
<evidence type="ECO:0000250" key="1"/>
<evidence type="ECO:0000305" key="2"/>
<reference key="1">
    <citation type="journal article" date="2005" name="Nature">
        <title>The genome of the social amoeba Dictyostelium discoideum.</title>
        <authorList>
            <person name="Eichinger L."/>
            <person name="Pachebat J.A."/>
            <person name="Gloeckner G."/>
            <person name="Rajandream M.A."/>
            <person name="Sucgang R."/>
            <person name="Berriman M."/>
            <person name="Song J."/>
            <person name="Olsen R."/>
            <person name="Szafranski K."/>
            <person name="Xu Q."/>
            <person name="Tunggal B."/>
            <person name="Kummerfeld S."/>
            <person name="Madera M."/>
            <person name="Konfortov B.A."/>
            <person name="Rivero F."/>
            <person name="Bankier A.T."/>
            <person name="Lehmann R."/>
            <person name="Hamlin N."/>
            <person name="Davies R."/>
            <person name="Gaudet P."/>
            <person name="Fey P."/>
            <person name="Pilcher K."/>
            <person name="Chen G."/>
            <person name="Saunders D."/>
            <person name="Sodergren E.J."/>
            <person name="Davis P."/>
            <person name="Kerhornou A."/>
            <person name="Nie X."/>
            <person name="Hall N."/>
            <person name="Anjard C."/>
            <person name="Hemphill L."/>
            <person name="Bason N."/>
            <person name="Farbrother P."/>
            <person name="Desany B."/>
            <person name="Just E."/>
            <person name="Morio T."/>
            <person name="Rost R."/>
            <person name="Churcher C.M."/>
            <person name="Cooper J."/>
            <person name="Haydock S."/>
            <person name="van Driessche N."/>
            <person name="Cronin A."/>
            <person name="Goodhead I."/>
            <person name="Muzny D.M."/>
            <person name="Mourier T."/>
            <person name="Pain A."/>
            <person name="Lu M."/>
            <person name="Harper D."/>
            <person name="Lindsay R."/>
            <person name="Hauser H."/>
            <person name="James K.D."/>
            <person name="Quiles M."/>
            <person name="Madan Babu M."/>
            <person name="Saito T."/>
            <person name="Buchrieser C."/>
            <person name="Wardroper A."/>
            <person name="Felder M."/>
            <person name="Thangavelu M."/>
            <person name="Johnson D."/>
            <person name="Knights A."/>
            <person name="Loulseged H."/>
            <person name="Mungall K.L."/>
            <person name="Oliver K."/>
            <person name="Price C."/>
            <person name="Quail M.A."/>
            <person name="Urushihara H."/>
            <person name="Hernandez J."/>
            <person name="Rabbinowitsch E."/>
            <person name="Steffen D."/>
            <person name="Sanders M."/>
            <person name="Ma J."/>
            <person name="Kohara Y."/>
            <person name="Sharp S."/>
            <person name="Simmonds M.N."/>
            <person name="Spiegler S."/>
            <person name="Tivey A."/>
            <person name="Sugano S."/>
            <person name="White B."/>
            <person name="Walker D."/>
            <person name="Woodward J.R."/>
            <person name="Winckler T."/>
            <person name="Tanaka Y."/>
            <person name="Shaulsky G."/>
            <person name="Schleicher M."/>
            <person name="Weinstock G.M."/>
            <person name="Rosenthal A."/>
            <person name="Cox E.C."/>
            <person name="Chisholm R.L."/>
            <person name="Gibbs R.A."/>
            <person name="Loomis W.F."/>
            <person name="Platzer M."/>
            <person name="Kay R.R."/>
            <person name="Williams J.G."/>
            <person name="Dear P.H."/>
            <person name="Noegel A.A."/>
            <person name="Barrell B.G."/>
            <person name="Kuspa A."/>
        </authorList>
    </citation>
    <scope>NUCLEOTIDE SEQUENCE [LARGE SCALE GENOMIC DNA]</scope>
    <source>
        <strain>AX4</strain>
    </source>
</reference>
<reference key="2">
    <citation type="journal article" date="2006" name="J. Proteome Res.">
        <title>Identification of novel centrosomal proteins in Dictyostelium discoideum by comparative proteomic approaches.</title>
        <authorList>
            <person name="Reinders Y."/>
            <person name="Schulz I."/>
            <person name="Graef R."/>
            <person name="Sickmann A."/>
        </authorList>
    </citation>
    <scope>IDENTIFICATION BY MASS SPECTROMETRY [LARGE SCALE ANALYSIS]</scope>
</reference>
<reference key="3">
    <citation type="journal article" date="2006" name="Mol. Cell. Proteomics">
        <title>Proteomics fingerprinting of phagosome maturation and evidence for the role of a Galpha during uptake.</title>
        <authorList>
            <person name="Gotthardt D."/>
            <person name="Blancheteau V."/>
            <person name="Bosserhoff A."/>
            <person name="Ruppert T."/>
            <person name="Delorenzi M."/>
            <person name="Soldati T."/>
        </authorList>
    </citation>
    <scope>IDENTIFICATION BY MASS SPECTROMETRY [LARGE SCALE ANALYSIS]</scope>
    <source>
        <strain>AX2</strain>
    </source>
</reference>
<accession>Q54TH8</accession>
<sequence>MNQPVFVLNTNAKRENQKEAQQGIFLAVKSVASIIKTCLGPKAMLKMILDPMGTTVVTNDGNAILREIDVTHPAAKSMIELSRAQDENVGDGTTSVVILAAEVLASSELFIEKKIHPHYIIKAFRMALDDSLSIVDQYSVAIDLKNRPEVLKVVQSCIGTKFIGKWGSLMCNLALDAVMTVHIQEEDGRSEIDIKRYAKVEKIPGGDISDCRVIRGVMLNKDVTHPKMKRMIKNPRIVLLDCSLEYKKGESDTMVDITNEDDFSALLKIEEEYVQRICEDIIKLKPDLVFTEKGVSDLAQHFFVKKGITCLRRLKKSENNRIARISGATIVSRTDELQESDIGTGCGLFEIRKIGDEYFTFLEDCKEPKACTILLRGASKDILNEVERNLTDALNVARNIVLDPRLVPGGGAIEMALSQALSEKSKSIEGLHQLPYKALAQSLECIPKILAQNCGANTVKLLTELRAKHATNPTENYTYGVDGDNGTIVDMKQLGIWDTHSVKVQTLKTAIESACTMLRVDHIASAASKQ</sequence>
<organism>
    <name type="scientific">Dictyostelium discoideum</name>
    <name type="common">Social amoeba</name>
    <dbReference type="NCBI Taxonomy" id="44689"/>
    <lineage>
        <taxon>Eukaryota</taxon>
        <taxon>Amoebozoa</taxon>
        <taxon>Evosea</taxon>
        <taxon>Eumycetozoa</taxon>
        <taxon>Dictyostelia</taxon>
        <taxon>Dictyosteliales</taxon>
        <taxon>Dictyosteliaceae</taxon>
        <taxon>Dictyostelium</taxon>
    </lineage>
</organism>
<keyword id="KW-0067">ATP-binding</keyword>
<keyword id="KW-0143">Chaperone</keyword>
<keyword id="KW-0963">Cytoplasm</keyword>
<keyword id="KW-0547">Nucleotide-binding</keyword>
<keyword id="KW-1185">Reference proteome</keyword>
<proteinExistence type="evidence at protein level"/>
<feature type="chain" id="PRO_0000327896" description="T-complex protein 1 subunit gamma">
    <location>
        <begin position="1"/>
        <end position="530"/>
    </location>
</feature>